<evidence type="ECO:0000255" key="1">
    <source>
        <dbReference type="HAMAP-Rule" id="MF_00095"/>
    </source>
</evidence>
<proteinExistence type="inferred from homology"/>
<gene>
    <name evidence="1" type="primary">sfsA</name>
    <name type="ordered locus">Ecok1_01380</name>
    <name type="ORF">APECO1_1839</name>
</gene>
<dbReference type="EMBL" id="CP000468">
    <property type="protein sequence ID" value="ABI99631.1"/>
    <property type="molecule type" value="Genomic_DNA"/>
</dbReference>
<dbReference type="RefSeq" id="WP_000396047.1">
    <property type="nucleotide sequence ID" value="NZ_CADILS010000027.1"/>
</dbReference>
<dbReference type="SMR" id="A1A7J2"/>
<dbReference type="KEGG" id="ecv:APECO1_1839"/>
<dbReference type="HOGENOM" id="CLU_052299_2_0_6"/>
<dbReference type="Proteomes" id="UP000008216">
    <property type="component" value="Chromosome"/>
</dbReference>
<dbReference type="GO" id="GO:0003677">
    <property type="term" value="F:DNA binding"/>
    <property type="evidence" value="ECO:0007669"/>
    <property type="project" value="UniProtKB-KW"/>
</dbReference>
<dbReference type="CDD" id="cd22359">
    <property type="entry name" value="SfsA-like_bacterial"/>
    <property type="match status" value="1"/>
</dbReference>
<dbReference type="FunFam" id="2.40.50.580:FF:000001">
    <property type="entry name" value="Sugar fermentation stimulation protein A"/>
    <property type="match status" value="1"/>
</dbReference>
<dbReference type="FunFam" id="3.40.1350.60:FF:000001">
    <property type="entry name" value="Sugar fermentation stimulation protein A"/>
    <property type="match status" value="1"/>
</dbReference>
<dbReference type="Gene3D" id="2.40.50.580">
    <property type="match status" value="1"/>
</dbReference>
<dbReference type="Gene3D" id="3.40.1350.60">
    <property type="match status" value="1"/>
</dbReference>
<dbReference type="HAMAP" id="MF_00095">
    <property type="entry name" value="SfsA"/>
    <property type="match status" value="1"/>
</dbReference>
<dbReference type="InterPro" id="IPR005224">
    <property type="entry name" value="SfsA"/>
</dbReference>
<dbReference type="InterPro" id="IPR040452">
    <property type="entry name" value="SfsA_C"/>
</dbReference>
<dbReference type="InterPro" id="IPR041465">
    <property type="entry name" value="SfsA_N"/>
</dbReference>
<dbReference type="NCBIfam" id="TIGR00230">
    <property type="entry name" value="sfsA"/>
    <property type="match status" value="1"/>
</dbReference>
<dbReference type="PANTHER" id="PTHR30545">
    <property type="entry name" value="SUGAR FERMENTATION STIMULATION PROTEIN A"/>
    <property type="match status" value="1"/>
</dbReference>
<dbReference type="PANTHER" id="PTHR30545:SF2">
    <property type="entry name" value="SUGAR FERMENTATION STIMULATION PROTEIN A"/>
    <property type="match status" value="1"/>
</dbReference>
<dbReference type="Pfam" id="PF03749">
    <property type="entry name" value="SfsA"/>
    <property type="match status" value="1"/>
</dbReference>
<dbReference type="Pfam" id="PF17746">
    <property type="entry name" value="SfsA_N"/>
    <property type="match status" value="1"/>
</dbReference>
<accession>A1A7J2</accession>
<sequence length="234" mass="26179">MEFSPPLQRATLIQRYKRFLADVITPDGRELTLHCPNTGAMTGCATPGDTVWYSTSDNTKRKYPHTWELTQSQSGAIICVNTLWANRLTKEAILNESISELAGYSSLKSEVKYGAERSRIDFMLQADSRPDCYIEVKSVTLAENEQGYFPDAVTERGQKHLRELMSVAAEGQRAVIFFAVLHSAITRFSPARHIDEKYAQLLSEAQQRGVEILAYKAELSAEGMALKKSLPVTL</sequence>
<organism>
    <name type="scientific">Escherichia coli O1:K1 / APEC</name>
    <dbReference type="NCBI Taxonomy" id="405955"/>
    <lineage>
        <taxon>Bacteria</taxon>
        <taxon>Pseudomonadati</taxon>
        <taxon>Pseudomonadota</taxon>
        <taxon>Gammaproteobacteria</taxon>
        <taxon>Enterobacterales</taxon>
        <taxon>Enterobacteriaceae</taxon>
        <taxon>Escherichia</taxon>
    </lineage>
</organism>
<name>SFSA_ECOK1</name>
<protein>
    <recommendedName>
        <fullName evidence="1">Sugar fermentation stimulation protein A</fullName>
    </recommendedName>
</protein>
<keyword id="KW-0238">DNA-binding</keyword>
<keyword id="KW-1185">Reference proteome</keyword>
<reference key="1">
    <citation type="journal article" date="2007" name="J. Bacteriol.">
        <title>The genome sequence of avian pathogenic Escherichia coli strain O1:K1:H7 shares strong similarities with human extraintestinal pathogenic E. coli genomes.</title>
        <authorList>
            <person name="Johnson T.J."/>
            <person name="Kariyawasam S."/>
            <person name="Wannemuehler Y."/>
            <person name="Mangiamele P."/>
            <person name="Johnson S.J."/>
            <person name="Doetkott C."/>
            <person name="Skyberg J.A."/>
            <person name="Lynne A.M."/>
            <person name="Johnson J.R."/>
            <person name="Nolan L.K."/>
        </authorList>
    </citation>
    <scope>NUCLEOTIDE SEQUENCE [LARGE SCALE GENOMIC DNA]</scope>
</reference>
<feature type="chain" id="PRO_1000007980" description="Sugar fermentation stimulation protein A">
    <location>
        <begin position="1"/>
        <end position="234"/>
    </location>
</feature>
<feature type="DNA-binding region" description="H-T-H motif" evidence="1">
    <location>
        <begin position="201"/>
        <end position="220"/>
    </location>
</feature>
<comment type="function">
    <text evidence="1">Binds to DNA non-specifically. Could be a regulatory factor involved in maltose metabolism.</text>
</comment>
<comment type="similarity">
    <text evidence="1">Belongs to the SfsA family.</text>
</comment>